<sequence>MKKPIIEFKNVSKVFEDNNTVVLKDINFELEEGKFYTLLGSSGSGKSTILNIIAGLLDATDGDIFLDGVRINDIPTNKRDVHTVFQSYALFPHMNVFENVAFPLRLRKVDKKEIQERVTEVLKMVQLEGFERRSIRKLSGGQRQRVAIARAIINQPRVVLLDEPLSALDLKLRTDMQYELRELQQRLGITFVFVTHDQEEALAMSDWIFVMNDGEIVQSGTPVDIYDEPINHFVATFIGESNILPGKMIEDYLVEFNGKRFEAVDGGMRPNESVEVVIRPEDLRITLPEEGKLQVKVDTQLFRGVHYEIIAYDELGNEWMIHSTRKAIVGEEIGLHFEPEDIHIMRLNETEEEFDARIEEYVEVEEQEAGLINAIEEERDEENNL</sequence>
<keyword id="KW-0067">ATP-binding</keyword>
<keyword id="KW-1003">Cell membrane</keyword>
<keyword id="KW-0472">Membrane</keyword>
<keyword id="KW-0547">Nucleotide-binding</keyword>
<keyword id="KW-1185">Reference proteome</keyword>
<keyword id="KW-1278">Translocase</keyword>
<keyword id="KW-0813">Transport</keyword>
<reference key="1">
    <citation type="journal article" date="2007" name="J. Bacteriol.">
        <title>Genome of the opportunistic pathogen Streptococcus sanguinis.</title>
        <authorList>
            <person name="Xu P."/>
            <person name="Alves J.M."/>
            <person name="Kitten T."/>
            <person name="Brown A."/>
            <person name="Chen Z."/>
            <person name="Ozaki L.S."/>
            <person name="Manque P."/>
            <person name="Ge X."/>
            <person name="Serrano M.G."/>
            <person name="Puiu D."/>
            <person name="Hendricks S."/>
            <person name="Wang Y."/>
            <person name="Chaplin M.D."/>
            <person name="Akan D."/>
            <person name="Paik S."/>
            <person name="Peterson D.L."/>
            <person name="Macrina F.L."/>
            <person name="Buck G.A."/>
        </authorList>
    </citation>
    <scope>NUCLEOTIDE SEQUENCE [LARGE SCALE GENOMIC DNA]</scope>
    <source>
        <strain>SK36</strain>
    </source>
</reference>
<accession>A3CMQ7</accession>
<organism>
    <name type="scientific">Streptococcus sanguinis (strain SK36)</name>
    <dbReference type="NCBI Taxonomy" id="388919"/>
    <lineage>
        <taxon>Bacteria</taxon>
        <taxon>Bacillati</taxon>
        <taxon>Bacillota</taxon>
        <taxon>Bacilli</taxon>
        <taxon>Lactobacillales</taxon>
        <taxon>Streptococcaceae</taxon>
        <taxon>Streptococcus</taxon>
    </lineage>
</organism>
<feature type="chain" id="PRO_0000286314" description="Spermidine/putrescine import ATP-binding protein PotA">
    <location>
        <begin position="1"/>
        <end position="385"/>
    </location>
</feature>
<feature type="domain" description="ABC transporter" evidence="1">
    <location>
        <begin position="6"/>
        <end position="238"/>
    </location>
</feature>
<feature type="binding site" evidence="1">
    <location>
        <begin position="40"/>
        <end position="47"/>
    </location>
    <ligand>
        <name>ATP</name>
        <dbReference type="ChEBI" id="CHEBI:30616"/>
    </ligand>
</feature>
<gene>
    <name evidence="1" type="primary">potA</name>
    <name type="ordered locus">SSA_1048</name>
</gene>
<proteinExistence type="inferred from homology"/>
<evidence type="ECO:0000255" key="1">
    <source>
        <dbReference type="HAMAP-Rule" id="MF_01726"/>
    </source>
</evidence>
<name>POTA_STRSV</name>
<dbReference type="EC" id="7.6.2.11" evidence="1"/>
<dbReference type="EMBL" id="CP000387">
    <property type="protein sequence ID" value="ABN44462.1"/>
    <property type="molecule type" value="Genomic_DNA"/>
</dbReference>
<dbReference type="RefSeq" id="WP_011836889.1">
    <property type="nucleotide sequence ID" value="NC_009009.1"/>
</dbReference>
<dbReference type="RefSeq" id="YP_001035012.1">
    <property type="nucleotide sequence ID" value="NC_009009.1"/>
</dbReference>
<dbReference type="SMR" id="A3CMQ7"/>
<dbReference type="STRING" id="388919.SSA_1048"/>
<dbReference type="KEGG" id="ssa:SSA_1048"/>
<dbReference type="PATRIC" id="fig|388919.9.peg.994"/>
<dbReference type="eggNOG" id="COG3842">
    <property type="taxonomic scope" value="Bacteria"/>
</dbReference>
<dbReference type="HOGENOM" id="CLU_000604_1_1_9"/>
<dbReference type="OrthoDB" id="9790614at2"/>
<dbReference type="Proteomes" id="UP000002148">
    <property type="component" value="Chromosome"/>
</dbReference>
<dbReference type="GO" id="GO:0043190">
    <property type="term" value="C:ATP-binding cassette (ABC) transporter complex"/>
    <property type="evidence" value="ECO:0007669"/>
    <property type="project" value="InterPro"/>
</dbReference>
<dbReference type="GO" id="GO:0015417">
    <property type="term" value="F:ABC-type polyamine transporter activity"/>
    <property type="evidence" value="ECO:0007669"/>
    <property type="project" value="UniProtKB-EC"/>
</dbReference>
<dbReference type="GO" id="GO:0005524">
    <property type="term" value="F:ATP binding"/>
    <property type="evidence" value="ECO:0007669"/>
    <property type="project" value="UniProtKB-KW"/>
</dbReference>
<dbReference type="GO" id="GO:0016887">
    <property type="term" value="F:ATP hydrolysis activity"/>
    <property type="evidence" value="ECO:0007669"/>
    <property type="project" value="InterPro"/>
</dbReference>
<dbReference type="FunFam" id="3.40.50.300:FF:000042">
    <property type="entry name" value="Maltose/maltodextrin ABC transporter, ATP-binding protein"/>
    <property type="match status" value="1"/>
</dbReference>
<dbReference type="Gene3D" id="2.40.50.100">
    <property type="match status" value="1"/>
</dbReference>
<dbReference type="Gene3D" id="3.40.50.300">
    <property type="entry name" value="P-loop containing nucleotide triphosphate hydrolases"/>
    <property type="match status" value="1"/>
</dbReference>
<dbReference type="InterPro" id="IPR003593">
    <property type="entry name" value="AAA+_ATPase"/>
</dbReference>
<dbReference type="InterPro" id="IPR050093">
    <property type="entry name" value="ABC_SmlMolc_Importer"/>
</dbReference>
<dbReference type="InterPro" id="IPR003439">
    <property type="entry name" value="ABC_transporter-like_ATP-bd"/>
</dbReference>
<dbReference type="InterPro" id="IPR017871">
    <property type="entry name" value="ABC_transporter-like_CS"/>
</dbReference>
<dbReference type="InterPro" id="IPR008995">
    <property type="entry name" value="Mo/tungstate-bd_C_term_dom"/>
</dbReference>
<dbReference type="InterPro" id="IPR027417">
    <property type="entry name" value="P-loop_NTPase"/>
</dbReference>
<dbReference type="InterPro" id="IPR013611">
    <property type="entry name" value="Transp-assoc_OB_typ2"/>
</dbReference>
<dbReference type="PANTHER" id="PTHR42781">
    <property type="entry name" value="SPERMIDINE/PUTRESCINE IMPORT ATP-BINDING PROTEIN POTA"/>
    <property type="match status" value="1"/>
</dbReference>
<dbReference type="PANTHER" id="PTHR42781:SF4">
    <property type="entry name" value="SPERMIDINE_PUTRESCINE IMPORT ATP-BINDING PROTEIN POTA"/>
    <property type="match status" value="1"/>
</dbReference>
<dbReference type="Pfam" id="PF00005">
    <property type="entry name" value="ABC_tran"/>
    <property type="match status" value="1"/>
</dbReference>
<dbReference type="Pfam" id="PF08402">
    <property type="entry name" value="TOBE_2"/>
    <property type="match status" value="1"/>
</dbReference>
<dbReference type="SMART" id="SM00382">
    <property type="entry name" value="AAA"/>
    <property type="match status" value="1"/>
</dbReference>
<dbReference type="SUPFAM" id="SSF50331">
    <property type="entry name" value="MOP-like"/>
    <property type="match status" value="1"/>
</dbReference>
<dbReference type="SUPFAM" id="SSF52540">
    <property type="entry name" value="P-loop containing nucleoside triphosphate hydrolases"/>
    <property type="match status" value="1"/>
</dbReference>
<dbReference type="PROSITE" id="PS00211">
    <property type="entry name" value="ABC_TRANSPORTER_1"/>
    <property type="match status" value="1"/>
</dbReference>
<dbReference type="PROSITE" id="PS50893">
    <property type="entry name" value="ABC_TRANSPORTER_2"/>
    <property type="match status" value="1"/>
</dbReference>
<dbReference type="PROSITE" id="PS51305">
    <property type="entry name" value="POTA"/>
    <property type="match status" value="1"/>
</dbReference>
<protein>
    <recommendedName>
        <fullName evidence="1">Spermidine/putrescine import ATP-binding protein PotA</fullName>
        <ecNumber evidence="1">7.6.2.11</ecNumber>
    </recommendedName>
</protein>
<comment type="function">
    <text evidence="1">Part of the ABC transporter complex PotABCD involved in spermidine/putrescine import. Responsible for energy coupling to the transport system.</text>
</comment>
<comment type="catalytic activity">
    <reaction evidence="1">
        <text>ATP + H2O + polyamine-[polyamine-binding protein]Side 1 = ADP + phosphate + polyamineSide 2 + [polyamine-binding protein]Side 1.</text>
        <dbReference type="EC" id="7.6.2.11"/>
    </reaction>
</comment>
<comment type="subunit">
    <text evidence="1">The complex is composed of two ATP-binding proteins (PotA), two transmembrane proteins (PotB and PotC) and a solute-binding protein (PotD).</text>
</comment>
<comment type="subcellular location">
    <subcellularLocation>
        <location evidence="1">Cell membrane</location>
        <topology evidence="1">Peripheral membrane protein</topology>
    </subcellularLocation>
</comment>
<comment type="similarity">
    <text evidence="1">Belongs to the ABC transporter superfamily. Spermidine/putrescine importer (TC 3.A.1.11.1) family.</text>
</comment>